<gene>
    <name type="primary">ZNF16</name>
    <name type="synonym">HZF1</name>
    <name type="synonym">KOX9</name>
</gene>
<evidence type="ECO:0000255" key="1">
    <source>
        <dbReference type="PROSITE-ProRule" id="PRU00042"/>
    </source>
</evidence>
<evidence type="ECO:0000256" key="2">
    <source>
        <dbReference type="SAM" id="MobiDB-lite"/>
    </source>
</evidence>
<evidence type="ECO:0000269" key="3">
    <source>
    </source>
</evidence>
<evidence type="ECO:0000269" key="4">
    <source>
    </source>
</evidence>
<evidence type="ECO:0000269" key="5">
    <source>
    </source>
</evidence>
<evidence type="ECO:0000269" key="6">
    <source>
    </source>
</evidence>
<evidence type="ECO:0000305" key="7"/>
<evidence type="ECO:0007744" key="8">
    <source>
    </source>
</evidence>
<evidence type="ECO:0007744" key="9">
    <source>
    </source>
</evidence>
<protein>
    <recommendedName>
        <fullName>Zinc finger protein 16</fullName>
    </recommendedName>
    <alternativeName>
        <fullName>Zinc finger protein KOX9</fullName>
    </alternativeName>
</protein>
<keyword id="KW-0007">Acetylation</keyword>
<keyword id="KW-0010">Activator</keyword>
<keyword id="KW-0131">Cell cycle</keyword>
<keyword id="KW-0132">Cell division</keyword>
<keyword id="KW-0238">DNA-binding</keyword>
<keyword id="KW-1017">Isopeptide bond</keyword>
<keyword id="KW-0479">Metal-binding</keyword>
<keyword id="KW-0497">Mitogen</keyword>
<keyword id="KW-0539">Nucleus</keyword>
<keyword id="KW-1267">Proteomics identification</keyword>
<keyword id="KW-1185">Reference proteome</keyword>
<keyword id="KW-0677">Repeat</keyword>
<keyword id="KW-0804">Transcription</keyword>
<keyword id="KW-0805">Transcription regulation</keyword>
<keyword id="KW-0832">Ubl conjugation</keyword>
<keyword id="KW-0862">Zinc</keyword>
<keyword id="KW-0863">Zinc-finger</keyword>
<sequence length="682" mass="76472">MPSLRTRREEAEMELSVPGPSPWTPAAQARVRDAPAVTHPGSAACGTPCCSDTELEAICPHYQQPDCDTRTEDKEFLHKEDIHEDLESQAEISENYAGDVSQVPELGDLCDDVSERDWGVPEGRRLPQSLSQEGDFTPAAMGLLRGPLGEKDLDCNGFDSRFSLSPNLMACQEIPTEERPHPYDMGGQSFQHSVDLTGHEGVPTAESPLICNECGKTFQGNPDLIQRQIVHTGEASFMCDDCGKTFSQNSVLKNRHRSHMSEKAYQCSECGKAFRGHSDFSRHQSHHSSERPYMCNECGKAFSQNSSLKKHQKSHMSEKPYECNECGKAFRRSSNLIQHQRIHSGEKPYVCSECGKAFRRSSNLIKHHRTHTGEKPFECGECGKAFSQSAHLRKHQRVHTGEKPYECNDCGKPFSRVSNLIKHHRVHTGEKPYKCSDCGKAFSQSSSLIQHRRIHTGEKPHVCNVCGKAFSYSSVLRKHQIIHTGEKPYRCSVCGKAFSHSSALIQHQGVHTGDKPYACHECGKTFGRSSNLILHQRVHTGEKPYECTECGKTFSQSSTLIQHQRIHNGLKPHECNQCGKAFNRSSNLIHHQKVHTGEKPYTCVECGKGFSQSSHLIQHQIIHTGERPYKCSECGKAFSQRSVLIQHQRIHTGVKPYDCAACGKAFSQRSKLIKHQLIHTRE</sequence>
<feature type="chain" id="PRO_0000047338" description="Zinc finger protein 16">
    <location>
        <begin position="1"/>
        <end position="682"/>
    </location>
</feature>
<feature type="zinc finger region" description="C2H2-type 1; degenerate" evidence="1">
    <location>
        <begin position="209"/>
        <end position="231"/>
    </location>
</feature>
<feature type="zinc finger region" description="C2H2-type 2; degenerate" evidence="1">
    <location>
        <begin position="237"/>
        <end position="259"/>
    </location>
</feature>
<feature type="zinc finger region" description="C2H2-type 3" evidence="1">
    <location>
        <begin position="265"/>
        <end position="287"/>
    </location>
</feature>
<feature type="zinc finger region" description="C2H2-type 4" evidence="1">
    <location>
        <begin position="293"/>
        <end position="315"/>
    </location>
</feature>
<feature type="zinc finger region" description="C2H2-type 5" evidence="1">
    <location>
        <begin position="321"/>
        <end position="343"/>
    </location>
</feature>
<feature type="zinc finger region" description="C2H2-type 6" evidence="1">
    <location>
        <begin position="349"/>
        <end position="371"/>
    </location>
</feature>
<feature type="zinc finger region" description="C2H2-type 7" evidence="1">
    <location>
        <begin position="377"/>
        <end position="399"/>
    </location>
</feature>
<feature type="zinc finger region" description="C2H2-type 8" evidence="1">
    <location>
        <begin position="405"/>
        <end position="427"/>
    </location>
</feature>
<feature type="zinc finger region" description="C2H2-type 9" evidence="1">
    <location>
        <begin position="433"/>
        <end position="455"/>
    </location>
</feature>
<feature type="zinc finger region" description="C2H2-type 10" evidence="1">
    <location>
        <begin position="461"/>
        <end position="483"/>
    </location>
</feature>
<feature type="zinc finger region" description="C2H2-type 11" evidence="1">
    <location>
        <begin position="489"/>
        <end position="511"/>
    </location>
</feature>
<feature type="zinc finger region" description="C2H2-type 12" evidence="1">
    <location>
        <begin position="517"/>
        <end position="539"/>
    </location>
</feature>
<feature type="zinc finger region" description="C2H2-type 13" evidence="1">
    <location>
        <begin position="545"/>
        <end position="567"/>
    </location>
</feature>
<feature type="zinc finger region" description="C2H2-type 14" evidence="1">
    <location>
        <begin position="573"/>
        <end position="595"/>
    </location>
</feature>
<feature type="zinc finger region" description="C2H2-type 15" evidence="1">
    <location>
        <begin position="601"/>
        <end position="623"/>
    </location>
</feature>
<feature type="zinc finger region" description="C2H2-type 16" evidence="1">
    <location>
        <begin position="629"/>
        <end position="651"/>
    </location>
</feature>
<feature type="zinc finger region" description="C2H2-type 17" evidence="1">
    <location>
        <begin position="657"/>
        <end position="679"/>
    </location>
</feature>
<feature type="region of interest" description="Disordered" evidence="2">
    <location>
        <begin position="1"/>
        <end position="43"/>
    </location>
</feature>
<feature type="region of interest" description="Necessary for transcription activation">
    <location>
        <begin position="62"/>
        <end position="210"/>
    </location>
</feature>
<feature type="region of interest" description="Required for nuclear localization">
    <location>
        <begin position="268"/>
        <end position="393"/>
    </location>
</feature>
<feature type="region of interest" description="Required for nuclear localization">
    <location>
        <begin position="341"/>
        <end position="373"/>
    </location>
</feature>
<feature type="region of interest" description="Required for nuclear localization">
    <location>
        <begin position="473"/>
        <end position="503"/>
    </location>
</feature>
<feature type="compositionally biased region" description="Basic and acidic residues" evidence="2">
    <location>
        <begin position="1"/>
        <end position="10"/>
    </location>
</feature>
<feature type="modified residue" description="N6-acetyllysine" evidence="8">
    <location>
        <position position="487"/>
    </location>
</feature>
<feature type="cross-link" description="Glycyl lysine isopeptide (Lys-Gly) (interchain with G-Cter in SUMO2)" evidence="9">
    <location>
        <position position="253"/>
    </location>
</feature>
<feature type="sequence variant" id="VAR_024193" description="In dbSNP:rs3735784.">
    <original>E</original>
    <variation>K</variation>
    <location>
        <position position="105"/>
    </location>
</feature>
<feature type="sequence variant" id="VAR_024194" description="In dbSNP:rs3735786.">
    <original>R</original>
    <variation>H</variation>
    <location>
        <position position="227"/>
    </location>
</feature>
<proteinExistence type="evidence at protein level"/>
<reference key="1">
    <citation type="journal article" date="2006" name="Leukemia">
        <title>Identification and characterization of a novel zinc finger protein (HZF1) gene and its function in erythroid and megakaryocytic differentiation of K562 cells.</title>
        <authorList>
            <person name="Peng H."/>
            <person name="Du Z.W."/>
            <person name="Zhang J.W."/>
        </authorList>
    </citation>
    <scope>NUCLEOTIDE SEQUENCE [MRNA]</scope>
    <scope>FUNCTION</scope>
    <scope>INDUCTION</scope>
    <scope>SUBCELLULAR LOCATION</scope>
    <scope>TISSUE SPECIFICITY</scope>
    <source>
        <tissue>Bone marrow</tissue>
    </source>
</reference>
<reference key="2">
    <citation type="journal article" date="2004" name="Nat. Genet.">
        <title>Complete sequencing and characterization of 21,243 full-length human cDNAs.</title>
        <authorList>
            <person name="Ota T."/>
            <person name="Suzuki Y."/>
            <person name="Nishikawa T."/>
            <person name="Otsuki T."/>
            <person name="Sugiyama T."/>
            <person name="Irie R."/>
            <person name="Wakamatsu A."/>
            <person name="Hayashi K."/>
            <person name="Sato H."/>
            <person name="Nagai K."/>
            <person name="Kimura K."/>
            <person name="Makita H."/>
            <person name="Sekine M."/>
            <person name="Obayashi M."/>
            <person name="Nishi T."/>
            <person name="Shibahara T."/>
            <person name="Tanaka T."/>
            <person name="Ishii S."/>
            <person name="Yamamoto J."/>
            <person name="Saito K."/>
            <person name="Kawai Y."/>
            <person name="Isono Y."/>
            <person name="Nakamura Y."/>
            <person name="Nagahari K."/>
            <person name="Murakami K."/>
            <person name="Yasuda T."/>
            <person name="Iwayanagi T."/>
            <person name="Wagatsuma M."/>
            <person name="Shiratori A."/>
            <person name="Sudo H."/>
            <person name="Hosoiri T."/>
            <person name="Kaku Y."/>
            <person name="Kodaira H."/>
            <person name="Kondo H."/>
            <person name="Sugawara M."/>
            <person name="Takahashi M."/>
            <person name="Kanda K."/>
            <person name="Yokoi T."/>
            <person name="Furuya T."/>
            <person name="Kikkawa E."/>
            <person name="Omura Y."/>
            <person name="Abe K."/>
            <person name="Kamihara K."/>
            <person name="Katsuta N."/>
            <person name="Sato K."/>
            <person name="Tanikawa M."/>
            <person name="Yamazaki M."/>
            <person name="Ninomiya K."/>
            <person name="Ishibashi T."/>
            <person name="Yamashita H."/>
            <person name="Murakawa K."/>
            <person name="Fujimori K."/>
            <person name="Tanai H."/>
            <person name="Kimata M."/>
            <person name="Watanabe M."/>
            <person name="Hiraoka S."/>
            <person name="Chiba Y."/>
            <person name="Ishida S."/>
            <person name="Ono Y."/>
            <person name="Takiguchi S."/>
            <person name="Watanabe S."/>
            <person name="Yosida M."/>
            <person name="Hotuta T."/>
            <person name="Kusano J."/>
            <person name="Kanehori K."/>
            <person name="Takahashi-Fujii A."/>
            <person name="Hara H."/>
            <person name="Tanase T.-O."/>
            <person name="Nomura Y."/>
            <person name="Togiya S."/>
            <person name="Komai F."/>
            <person name="Hara R."/>
            <person name="Takeuchi K."/>
            <person name="Arita M."/>
            <person name="Imose N."/>
            <person name="Musashino K."/>
            <person name="Yuuki H."/>
            <person name="Oshima A."/>
            <person name="Sasaki N."/>
            <person name="Aotsuka S."/>
            <person name="Yoshikawa Y."/>
            <person name="Matsunawa H."/>
            <person name="Ichihara T."/>
            <person name="Shiohata N."/>
            <person name="Sano S."/>
            <person name="Moriya S."/>
            <person name="Momiyama H."/>
            <person name="Satoh N."/>
            <person name="Takami S."/>
            <person name="Terashima Y."/>
            <person name="Suzuki O."/>
            <person name="Nakagawa S."/>
            <person name="Senoh A."/>
            <person name="Mizoguchi H."/>
            <person name="Goto Y."/>
            <person name="Shimizu F."/>
            <person name="Wakebe H."/>
            <person name="Hishigaki H."/>
            <person name="Watanabe T."/>
            <person name="Sugiyama A."/>
            <person name="Takemoto M."/>
            <person name="Kawakami B."/>
            <person name="Yamazaki M."/>
            <person name="Watanabe K."/>
            <person name="Kumagai A."/>
            <person name="Itakura S."/>
            <person name="Fukuzumi Y."/>
            <person name="Fujimori Y."/>
            <person name="Komiyama M."/>
            <person name="Tashiro H."/>
            <person name="Tanigami A."/>
            <person name="Fujiwara T."/>
            <person name="Ono T."/>
            <person name="Yamada K."/>
            <person name="Fujii Y."/>
            <person name="Ozaki K."/>
            <person name="Hirao M."/>
            <person name="Ohmori Y."/>
            <person name="Kawabata A."/>
            <person name="Hikiji T."/>
            <person name="Kobatake N."/>
            <person name="Inagaki H."/>
            <person name="Ikema Y."/>
            <person name="Okamoto S."/>
            <person name="Okitani R."/>
            <person name="Kawakami T."/>
            <person name="Noguchi S."/>
            <person name="Itoh T."/>
            <person name="Shigeta K."/>
            <person name="Senba T."/>
            <person name="Matsumura K."/>
            <person name="Nakajima Y."/>
            <person name="Mizuno T."/>
            <person name="Morinaga M."/>
            <person name="Sasaki M."/>
            <person name="Togashi T."/>
            <person name="Oyama M."/>
            <person name="Hata H."/>
            <person name="Watanabe M."/>
            <person name="Komatsu T."/>
            <person name="Mizushima-Sugano J."/>
            <person name="Satoh T."/>
            <person name="Shirai Y."/>
            <person name="Takahashi Y."/>
            <person name="Nakagawa K."/>
            <person name="Okumura K."/>
            <person name="Nagase T."/>
            <person name="Nomura N."/>
            <person name="Kikuchi H."/>
            <person name="Masuho Y."/>
            <person name="Yamashita R."/>
            <person name="Nakai K."/>
            <person name="Yada T."/>
            <person name="Nakamura Y."/>
            <person name="Ohara O."/>
            <person name="Isogai T."/>
            <person name="Sugano S."/>
        </authorList>
    </citation>
    <scope>NUCLEOTIDE SEQUENCE [LARGE SCALE MRNA]</scope>
</reference>
<reference key="3">
    <citation type="submission" date="2005-09" db="EMBL/GenBank/DDBJ databases">
        <authorList>
            <person name="Mural R.J."/>
            <person name="Istrail S."/>
            <person name="Sutton G.G."/>
            <person name="Florea L."/>
            <person name="Halpern A.L."/>
            <person name="Mobarry C.M."/>
            <person name="Lippert R."/>
            <person name="Walenz B."/>
            <person name="Shatkay H."/>
            <person name="Dew I."/>
            <person name="Miller J.R."/>
            <person name="Flanigan M.J."/>
            <person name="Edwards N.J."/>
            <person name="Bolanos R."/>
            <person name="Fasulo D."/>
            <person name="Halldorsson B.V."/>
            <person name="Hannenhalli S."/>
            <person name="Turner R."/>
            <person name="Yooseph S."/>
            <person name="Lu F."/>
            <person name="Nusskern D.R."/>
            <person name="Shue B.C."/>
            <person name="Zheng X.H."/>
            <person name="Zhong F."/>
            <person name="Delcher A.L."/>
            <person name="Huson D.H."/>
            <person name="Kravitz S.A."/>
            <person name="Mouchard L."/>
            <person name="Reinert K."/>
            <person name="Remington K.A."/>
            <person name="Clark A.G."/>
            <person name="Waterman M.S."/>
            <person name="Eichler E.E."/>
            <person name="Adams M.D."/>
            <person name="Hunkapiller M.W."/>
            <person name="Myers E.W."/>
            <person name="Venter J.C."/>
        </authorList>
    </citation>
    <scope>NUCLEOTIDE SEQUENCE [LARGE SCALE GENOMIC DNA]</scope>
</reference>
<reference key="4">
    <citation type="journal article" date="2004" name="Genome Res.">
        <title>The status, quality, and expansion of the NIH full-length cDNA project: the Mammalian Gene Collection (MGC).</title>
        <authorList>
            <consortium name="The MGC Project Team"/>
        </authorList>
    </citation>
    <scope>NUCLEOTIDE SEQUENCE [LARGE SCALE MRNA]</scope>
    <source>
        <tissue>Ovary</tissue>
    </source>
</reference>
<reference key="5">
    <citation type="journal article" date="1990" name="New Biol.">
        <title>Multiple genes encoding zinc finger domains are expressed in human T cells.</title>
        <authorList>
            <person name="Thiesen H.-J."/>
        </authorList>
    </citation>
    <scope>NUCLEOTIDE SEQUENCE [MRNA] OF 461-516</scope>
    <source>
        <tissue>Lymphoid tissue</tissue>
    </source>
</reference>
<reference key="6">
    <citation type="journal article" date="2009" name="Science">
        <title>Lysine acetylation targets protein complexes and co-regulates major cellular functions.</title>
        <authorList>
            <person name="Choudhary C."/>
            <person name="Kumar C."/>
            <person name="Gnad F."/>
            <person name="Nielsen M.L."/>
            <person name="Rehman M."/>
            <person name="Walther T.C."/>
            <person name="Olsen J.V."/>
            <person name="Mann M."/>
        </authorList>
    </citation>
    <scope>ACETYLATION [LARGE SCALE ANALYSIS] AT LYS-487</scope>
    <scope>IDENTIFICATION BY MASS SPECTROMETRY [LARGE SCALE ANALYSIS]</scope>
</reference>
<reference key="7">
    <citation type="journal article" date="2010" name="Mol. Biotechnol.">
        <title>Identification of the trans-activation domain and the nuclear location signals of human zinc finger protein HZF1 (ZNF16).</title>
        <authorList>
            <person name="Deng M.J."/>
            <person name="Li X.B."/>
            <person name="Peng H."/>
            <person name="Zhang J.W."/>
        </authorList>
    </citation>
    <scope>FUNCTION</scope>
</reference>
<reference key="8">
    <citation type="journal article" date="2011" name="Mol. Med. Report.">
        <title>Identification of HZF1 as a novel target gene of the MEF2 transcription factor.</title>
        <authorList>
            <person name="Liu X."/>
            <person name="Jin E.Z."/>
            <person name="Zhi J.X."/>
            <person name="Li X.Q."/>
        </authorList>
    </citation>
    <scope>INDUCTION</scope>
</reference>
<reference key="9">
    <citation type="journal article" date="2011" name="Mol. Med. Report.">
        <title>Zinc finger protein HZF1 promotes K562 cell proliferation by interacting with and inhibiting INCA1.</title>
        <authorList>
            <person name="Li X.B."/>
            <person name="Chen J."/>
            <person name="Deng M.J."/>
            <person name="Wang F."/>
            <person name="Du Z.W."/>
            <person name="Zhang J.W."/>
        </authorList>
    </citation>
    <scope>FUNCTION</scope>
    <scope>INTERACTION WITH INCA1</scope>
</reference>
<reference key="10">
    <citation type="journal article" date="2017" name="Nat. Struct. Mol. Biol.">
        <title>Site-specific mapping of the human SUMO proteome reveals co-modification with phosphorylation.</title>
        <authorList>
            <person name="Hendriks I.A."/>
            <person name="Lyon D."/>
            <person name="Young C."/>
            <person name="Jensen L.J."/>
            <person name="Vertegaal A.C."/>
            <person name="Nielsen M.L."/>
        </authorList>
    </citation>
    <scope>SUMOYLATION [LARGE SCALE ANALYSIS] AT LYS-253</scope>
    <scope>IDENTIFICATION BY MASS SPECTROMETRY [LARGE SCALE ANALYSIS]</scope>
</reference>
<comment type="function">
    <text evidence="3 4 6">Acts as a transcriptional activator. Promotes cell proliferation by facilitating the cell cycle phase transition from the S to G2/M phase. Involved in both the hemin- and phorbol myristate acetate (PMA)-induced erythroid and megakaryocytic differentiation, respectively. Also plays a role as an inhibitor of cell apoptosis.</text>
</comment>
<comment type="subunit">
    <text evidence="6">Interacts with INCA1; the interaction inhibits INCA1 activity and induces the cell cycle process.</text>
</comment>
<comment type="interaction">
    <interactant intactId="EBI-3921553">
        <id>P17020</id>
    </interactant>
    <interactant intactId="EBI-745213">
        <id>P29972</id>
        <label>AQP1</label>
    </interactant>
    <organismsDiffer>false</organismsDiffer>
    <experiments>3</experiments>
</comment>
<comment type="interaction">
    <interactant intactId="EBI-3921553">
        <id>P17020</id>
    </interactant>
    <interactant intactId="EBI-12039347">
        <id>Q9NVQ4-2</id>
        <label>FAIM</label>
    </interactant>
    <organismsDiffer>false</organismsDiffer>
    <experiments>3</experiments>
</comment>
<comment type="interaction">
    <interactant intactId="EBI-3921553">
        <id>P17020</id>
    </interactant>
    <interactant intactId="EBI-6509505">
        <id>Q0VD86</id>
        <label>INCA1</label>
    </interactant>
    <organismsDiffer>false</organismsDiffer>
    <experiments>2</experiments>
</comment>
<comment type="interaction">
    <interactant intactId="EBI-3921553">
        <id>P17020</id>
    </interactant>
    <interactant intactId="EBI-7781767">
        <id>Q9UFB7</id>
        <label>ZBTB47</label>
    </interactant>
    <organismsDiffer>false</organismsDiffer>
    <experiments>3</experiments>
</comment>
<comment type="interaction">
    <interactant intactId="EBI-3921553">
        <id>P17020</id>
    </interactant>
    <interactant intactId="EBI-746345">
        <id>Q9NP64</id>
        <label>ZCCHC17</label>
    </interactant>
    <organismsDiffer>false</organismsDiffer>
    <experiments>3</experiments>
</comment>
<comment type="interaction">
    <interactant intactId="EBI-3921553">
        <id>P17020</id>
    </interactant>
    <interactant intactId="EBI-5278328">
        <id>Q8IZC7</id>
        <label>ZNF101</label>
    </interactant>
    <organismsDiffer>false</organismsDiffer>
    <experiments>3</experiments>
</comment>
<comment type="subcellular location">
    <subcellularLocation>
        <location evidence="3">Nucleus</location>
    </subcellularLocation>
</comment>
<comment type="tissue specificity">
    <text evidence="3">Ubiquitous.</text>
</comment>
<comment type="induction">
    <text evidence="3 5">Up-regulated by hemin during erythroid differentiation. Up-regulated by phorbol myristate acetate (PMA) during megakaryocytic differentiation. Up-regulated by the transcriptional activator MEF2A.</text>
</comment>
<comment type="similarity">
    <text evidence="7">Belongs to the krueppel C2H2-type zinc-finger protein family.</text>
</comment>
<comment type="sequence caution" evidence="7">
    <conflict type="erroneous initiation">
        <sequence resource="EMBL-CDS" id="AAF75235"/>
    </conflict>
    <text>Truncated N-terminus.</text>
</comment>
<comment type="sequence caution" evidence="7">
    <conflict type="erroneous initiation">
        <sequence resource="EMBL-CDS" id="AAZ20773"/>
    </conflict>
    <text>Truncated N-terminus.</text>
</comment>
<name>ZNF16_HUMAN</name>
<organism>
    <name type="scientific">Homo sapiens</name>
    <name type="common">Human</name>
    <dbReference type="NCBI Taxonomy" id="9606"/>
    <lineage>
        <taxon>Eukaryota</taxon>
        <taxon>Metazoa</taxon>
        <taxon>Chordata</taxon>
        <taxon>Craniata</taxon>
        <taxon>Vertebrata</taxon>
        <taxon>Euteleostomi</taxon>
        <taxon>Mammalia</taxon>
        <taxon>Eutheria</taxon>
        <taxon>Euarchontoglires</taxon>
        <taxon>Primates</taxon>
        <taxon>Haplorrhini</taxon>
        <taxon>Catarrhini</taxon>
        <taxon>Hominidae</taxon>
        <taxon>Homo</taxon>
    </lineage>
</organism>
<dbReference type="EMBL" id="AF244088">
    <property type="protein sequence ID" value="AAF75235.1"/>
    <property type="status" value="ALT_INIT"/>
    <property type="molecule type" value="mRNA"/>
</dbReference>
<dbReference type="EMBL" id="DQ117529">
    <property type="protein sequence ID" value="AAZ20773.1"/>
    <property type="status" value="ALT_INIT"/>
    <property type="molecule type" value="mRNA"/>
</dbReference>
<dbReference type="EMBL" id="AK127625">
    <property type="protein sequence ID" value="BAG54536.1"/>
    <property type="molecule type" value="mRNA"/>
</dbReference>
<dbReference type="EMBL" id="CH471162">
    <property type="protein sequence ID" value="EAW82027.1"/>
    <property type="molecule type" value="Genomic_DNA"/>
</dbReference>
<dbReference type="EMBL" id="CH471162">
    <property type="protein sequence ID" value="EAW82028.1"/>
    <property type="molecule type" value="Genomic_DNA"/>
</dbReference>
<dbReference type="EMBL" id="BC010996">
    <property type="protein sequence ID" value="AAH10996.2"/>
    <property type="molecule type" value="mRNA"/>
</dbReference>
<dbReference type="EMBL" id="X52340">
    <property type="protein sequence ID" value="CAA36566.1"/>
    <property type="molecule type" value="mRNA"/>
</dbReference>
<dbReference type="CCDS" id="CCDS6437.1"/>
<dbReference type="PIR" id="I37977">
    <property type="entry name" value="I37977"/>
</dbReference>
<dbReference type="RefSeq" id="NP_001025147.2">
    <property type="nucleotide sequence ID" value="NM_001029976.3"/>
</dbReference>
<dbReference type="RefSeq" id="NP_001400493.1">
    <property type="nucleotide sequence ID" value="NM_001413564.1"/>
</dbReference>
<dbReference type="RefSeq" id="NP_001400494.1">
    <property type="nucleotide sequence ID" value="NM_001413565.1"/>
</dbReference>
<dbReference type="RefSeq" id="NP_001400495.1">
    <property type="nucleotide sequence ID" value="NM_001413566.1"/>
</dbReference>
<dbReference type="RefSeq" id="NP_008889.2">
    <property type="nucleotide sequence ID" value="NM_006958.2"/>
</dbReference>
<dbReference type="RefSeq" id="XP_005272398.1">
    <property type="nucleotide sequence ID" value="XM_005272341.2"/>
</dbReference>
<dbReference type="RefSeq" id="XP_011515600.1">
    <property type="nucleotide sequence ID" value="XM_011517298.1"/>
</dbReference>
<dbReference type="SMR" id="P17020"/>
<dbReference type="BioGRID" id="113395">
    <property type="interactions" value="42"/>
</dbReference>
<dbReference type="FunCoup" id="P17020">
    <property type="interactions" value="1197"/>
</dbReference>
<dbReference type="IntAct" id="P17020">
    <property type="interactions" value="58"/>
</dbReference>
<dbReference type="STRING" id="9606.ENSP00000276816"/>
<dbReference type="GlyGen" id="P17020">
    <property type="glycosylation" value="1 site"/>
</dbReference>
<dbReference type="iPTMnet" id="P17020"/>
<dbReference type="PhosphoSitePlus" id="P17020"/>
<dbReference type="BioMuta" id="ZNF16"/>
<dbReference type="DMDM" id="68846743"/>
<dbReference type="jPOST" id="P17020"/>
<dbReference type="MassIVE" id="P17020"/>
<dbReference type="PaxDb" id="9606-ENSP00000276816"/>
<dbReference type="PeptideAtlas" id="P17020"/>
<dbReference type="ProteomicsDB" id="53416"/>
<dbReference type="Pumba" id="P17020"/>
<dbReference type="Antibodypedia" id="15018">
    <property type="antibodies" value="109 antibodies from 18 providers"/>
</dbReference>
<dbReference type="DNASU" id="7564"/>
<dbReference type="Ensembl" id="ENST00000276816.8">
    <property type="protein sequence ID" value="ENSP00000276816.4"/>
    <property type="gene ID" value="ENSG00000170631.15"/>
</dbReference>
<dbReference type="Ensembl" id="ENST00000394909.7">
    <property type="protein sequence ID" value="ENSP00000378369.2"/>
    <property type="gene ID" value="ENSG00000170631.15"/>
</dbReference>
<dbReference type="Ensembl" id="ENST00000611477.1">
    <property type="protein sequence ID" value="ENSP00000484504.1"/>
    <property type="gene ID" value="ENSG00000170631.15"/>
</dbReference>
<dbReference type="GeneID" id="7564"/>
<dbReference type="KEGG" id="hsa:7564"/>
<dbReference type="MANE-Select" id="ENST00000394909.7">
    <property type="protein sequence ID" value="ENSP00000378369.2"/>
    <property type="RefSeq nucleotide sequence ID" value="NM_006958.3"/>
    <property type="RefSeq protein sequence ID" value="NP_008889.2"/>
</dbReference>
<dbReference type="UCSC" id="uc003zet.3">
    <property type="organism name" value="human"/>
</dbReference>
<dbReference type="AGR" id="HGNC:12947"/>
<dbReference type="CTD" id="7564"/>
<dbReference type="DisGeNET" id="7564"/>
<dbReference type="GeneCards" id="ZNF16"/>
<dbReference type="HGNC" id="HGNC:12947">
    <property type="gene designation" value="ZNF16"/>
</dbReference>
<dbReference type="HPA" id="ENSG00000170631">
    <property type="expression patterns" value="Low tissue specificity"/>
</dbReference>
<dbReference type="MIM" id="601262">
    <property type="type" value="gene"/>
</dbReference>
<dbReference type="neXtProt" id="NX_P17020"/>
<dbReference type="OpenTargets" id="ENSG00000170631"/>
<dbReference type="PharmGKB" id="PA37530"/>
<dbReference type="VEuPathDB" id="HostDB:ENSG00000170631"/>
<dbReference type="eggNOG" id="KOG1721">
    <property type="taxonomic scope" value="Eukaryota"/>
</dbReference>
<dbReference type="GeneTree" id="ENSGT00940000163050"/>
<dbReference type="HOGENOM" id="CLU_002678_57_1_1"/>
<dbReference type="InParanoid" id="P17020"/>
<dbReference type="OMA" id="PWIPAAQ"/>
<dbReference type="OrthoDB" id="8117402at2759"/>
<dbReference type="PAN-GO" id="P17020">
    <property type="GO annotations" value="4 GO annotations based on evolutionary models"/>
</dbReference>
<dbReference type="PhylomeDB" id="P17020"/>
<dbReference type="TreeFam" id="TF337005"/>
<dbReference type="PathwayCommons" id="P17020"/>
<dbReference type="SignaLink" id="P17020"/>
<dbReference type="BioGRID-ORCS" id="7564">
    <property type="hits" value="13 hits in 1177 CRISPR screens"/>
</dbReference>
<dbReference type="ChiTaRS" id="ZNF16">
    <property type="organism name" value="human"/>
</dbReference>
<dbReference type="GeneWiki" id="ZNF16"/>
<dbReference type="GenomeRNAi" id="7564"/>
<dbReference type="Pharos" id="P17020">
    <property type="development level" value="Tbio"/>
</dbReference>
<dbReference type="PRO" id="PR:P17020"/>
<dbReference type="Proteomes" id="UP000005640">
    <property type="component" value="Chromosome 8"/>
</dbReference>
<dbReference type="RNAct" id="P17020">
    <property type="molecule type" value="protein"/>
</dbReference>
<dbReference type="Bgee" id="ENSG00000170631">
    <property type="expression patterns" value="Expressed in primordial germ cell in gonad and 150 other cell types or tissues"/>
</dbReference>
<dbReference type="ExpressionAtlas" id="P17020">
    <property type="expression patterns" value="baseline and differential"/>
</dbReference>
<dbReference type="GO" id="GO:0005730">
    <property type="term" value="C:nucleolus"/>
    <property type="evidence" value="ECO:0000314"/>
    <property type="project" value="HPA"/>
</dbReference>
<dbReference type="GO" id="GO:0005654">
    <property type="term" value="C:nucleoplasm"/>
    <property type="evidence" value="ECO:0000314"/>
    <property type="project" value="HPA"/>
</dbReference>
<dbReference type="GO" id="GO:0005634">
    <property type="term" value="C:nucleus"/>
    <property type="evidence" value="ECO:0000314"/>
    <property type="project" value="UniProtKB"/>
</dbReference>
<dbReference type="GO" id="GO:0000981">
    <property type="term" value="F:DNA-binding transcription factor activity, RNA polymerase II-specific"/>
    <property type="evidence" value="ECO:0000318"/>
    <property type="project" value="GO_Central"/>
</dbReference>
<dbReference type="GO" id="GO:0000978">
    <property type="term" value="F:RNA polymerase II cis-regulatory region sequence-specific DNA binding"/>
    <property type="evidence" value="ECO:0000318"/>
    <property type="project" value="GO_Central"/>
</dbReference>
<dbReference type="GO" id="GO:0008270">
    <property type="term" value="F:zinc ion binding"/>
    <property type="evidence" value="ECO:0007669"/>
    <property type="project" value="UniProtKB-KW"/>
</dbReference>
<dbReference type="GO" id="GO:0051301">
    <property type="term" value="P:cell division"/>
    <property type="evidence" value="ECO:0007669"/>
    <property type="project" value="UniProtKB-KW"/>
</dbReference>
<dbReference type="GO" id="GO:0072707">
    <property type="term" value="P:cellular response to sodium dodecyl sulfate"/>
    <property type="evidence" value="ECO:0000314"/>
    <property type="project" value="UniProtKB"/>
</dbReference>
<dbReference type="GO" id="GO:0043066">
    <property type="term" value="P:negative regulation of apoptotic process"/>
    <property type="evidence" value="ECO:0000314"/>
    <property type="project" value="UniProtKB"/>
</dbReference>
<dbReference type="GO" id="GO:1901989">
    <property type="term" value="P:positive regulation of cell cycle phase transition"/>
    <property type="evidence" value="ECO:0000314"/>
    <property type="project" value="UniProtKB"/>
</dbReference>
<dbReference type="GO" id="GO:0051781">
    <property type="term" value="P:positive regulation of cell division"/>
    <property type="evidence" value="ECO:0007669"/>
    <property type="project" value="UniProtKB-KW"/>
</dbReference>
<dbReference type="GO" id="GO:0008284">
    <property type="term" value="P:positive regulation of cell population proliferation"/>
    <property type="evidence" value="ECO:0000314"/>
    <property type="project" value="UniProtKB"/>
</dbReference>
<dbReference type="GO" id="GO:0045648">
    <property type="term" value="P:positive regulation of erythrocyte differentiation"/>
    <property type="evidence" value="ECO:0000315"/>
    <property type="project" value="UniProtKB"/>
</dbReference>
<dbReference type="GO" id="GO:0033674">
    <property type="term" value="P:positive regulation of kinase activity"/>
    <property type="evidence" value="ECO:0000314"/>
    <property type="project" value="UniProtKB"/>
</dbReference>
<dbReference type="GO" id="GO:0045654">
    <property type="term" value="P:positive regulation of megakaryocyte differentiation"/>
    <property type="evidence" value="ECO:0000315"/>
    <property type="project" value="UniProtKB"/>
</dbReference>
<dbReference type="GO" id="GO:0006357">
    <property type="term" value="P:regulation of transcription by RNA polymerase II"/>
    <property type="evidence" value="ECO:0000318"/>
    <property type="project" value="GO_Central"/>
</dbReference>
<dbReference type="FunFam" id="3.30.160.60:FF:000478">
    <property type="entry name" value="Zinc finger protein 133"/>
    <property type="match status" value="1"/>
</dbReference>
<dbReference type="FunFam" id="3.30.160.60:FF:000914">
    <property type="entry name" value="Zinc finger protein 16"/>
    <property type="match status" value="3"/>
</dbReference>
<dbReference type="FunFam" id="3.30.160.60:FF:001618">
    <property type="entry name" value="Zinc finger protein 16"/>
    <property type="match status" value="1"/>
</dbReference>
<dbReference type="FunFam" id="3.30.160.60:FF:001658">
    <property type="entry name" value="Zinc finger protein 16"/>
    <property type="match status" value="1"/>
</dbReference>
<dbReference type="FunFam" id="3.30.160.60:FF:001901">
    <property type="entry name" value="Zinc finger protein 16"/>
    <property type="match status" value="1"/>
</dbReference>
<dbReference type="FunFam" id="3.30.160.60:FF:001903">
    <property type="entry name" value="Zinc finger protein 16"/>
    <property type="match status" value="1"/>
</dbReference>
<dbReference type="FunFam" id="3.30.160.60:FF:002463">
    <property type="entry name" value="Zinc finger protein 16"/>
    <property type="match status" value="1"/>
</dbReference>
<dbReference type="FunFam" id="3.30.160.60:FF:002711">
    <property type="entry name" value="Zinc finger protein 16"/>
    <property type="match status" value="1"/>
</dbReference>
<dbReference type="FunFam" id="3.30.160.60:FF:000274">
    <property type="entry name" value="zinc finger protein 16"/>
    <property type="match status" value="1"/>
</dbReference>
<dbReference type="FunFam" id="3.30.160.60:FF:001298">
    <property type="entry name" value="zinc finger protein 23 isoform X1"/>
    <property type="match status" value="1"/>
</dbReference>
<dbReference type="FunFam" id="3.30.160.60:FF:002259">
    <property type="entry name" value="zinc finger protein 271"/>
    <property type="match status" value="1"/>
</dbReference>
<dbReference type="FunFam" id="3.30.160.60:FF:000269">
    <property type="entry name" value="Zinc finger protein 287"/>
    <property type="match status" value="1"/>
</dbReference>
<dbReference type="FunFam" id="3.30.160.60:FF:000352">
    <property type="entry name" value="zinc finger protein 3 homolog"/>
    <property type="match status" value="1"/>
</dbReference>
<dbReference type="FunFam" id="3.30.160.60:FF:002090">
    <property type="entry name" value="Zinc finger protein 473"/>
    <property type="match status" value="1"/>
</dbReference>
<dbReference type="FunFam" id="3.30.160.60:FF:000330">
    <property type="entry name" value="Zinc finger with KRAB and SCAN domains 1"/>
    <property type="match status" value="1"/>
</dbReference>
<dbReference type="Gene3D" id="3.30.160.60">
    <property type="entry name" value="Classic Zinc Finger"/>
    <property type="match status" value="17"/>
</dbReference>
<dbReference type="InterPro" id="IPR050331">
    <property type="entry name" value="Zinc_finger"/>
</dbReference>
<dbReference type="InterPro" id="IPR036236">
    <property type="entry name" value="Znf_C2H2_sf"/>
</dbReference>
<dbReference type="InterPro" id="IPR013087">
    <property type="entry name" value="Znf_C2H2_type"/>
</dbReference>
<dbReference type="PANTHER" id="PTHR16515">
    <property type="entry name" value="PR DOMAIN ZINC FINGER PROTEIN"/>
    <property type="match status" value="1"/>
</dbReference>
<dbReference type="PANTHER" id="PTHR16515:SF57">
    <property type="entry name" value="ZINC FINGER PROTEIN 154-LIKE"/>
    <property type="match status" value="1"/>
</dbReference>
<dbReference type="Pfam" id="PF00096">
    <property type="entry name" value="zf-C2H2"/>
    <property type="match status" value="15"/>
</dbReference>
<dbReference type="SMART" id="SM00355">
    <property type="entry name" value="ZnF_C2H2"/>
    <property type="match status" value="17"/>
</dbReference>
<dbReference type="SUPFAM" id="SSF57667">
    <property type="entry name" value="beta-beta-alpha zinc fingers"/>
    <property type="match status" value="9"/>
</dbReference>
<dbReference type="PROSITE" id="PS00028">
    <property type="entry name" value="ZINC_FINGER_C2H2_1"/>
    <property type="match status" value="15"/>
</dbReference>
<dbReference type="PROSITE" id="PS50157">
    <property type="entry name" value="ZINC_FINGER_C2H2_2"/>
    <property type="match status" value="17"/>
</dbReference>
<accession>P17020</accession>
<accession>B3KXM4</accession>
<accession>D3DWP2</accession>
<accession>Q45SH7</accession>
<accession>Q96FG0</accession>
<accession>Q9NRA4</accession>